<name>GLAB_PARD8</name>
<reference key="1">
    <citation type="journal article" date="2007" name="PLoS Biol.">
        <title>Evolution of symbiotic bacteria in the distal human intestine.</title>
        <authorList>
            <person name="Xu J."/>
            <person name="Mahowald M.A."/>
            <person name="Ley R.E."/>
            <person name="Lozupone C.A."/>
            <person name="Hamady M."/>
            <person name="Martens E.C."/>
            <person name="Henrissat B."/>
            <person name="Coutinho P.M."/>
            <person name="Minx P."/>
            <person name="Latreille P."/>
            <person name="Cordum H."/>
            <person name="Van Brunt A."/>
            <person name="Kim K."/>
            <person name="Fulton R.S."/>
            <person name="Fulton L.A."/>
            <person name="Clifton S.W."/>
            <person name="Wilson R.K."/>
            <person name="Knight R.D."/>
            <person name="Gordon J.I."/>
        </authorList>
    </citation>
    <scope>NUCLEOTIDE SEQUENCE [LARGE SCALE GENOMIC DNA]</scope>
    <source>
        <strain>ATCC 8503 / DSM 20701 / CIP 104284 / JCM 5825 / NCTC 11152</strain>
    </source>
</reference>
<dbReference type="EC" id="3.2.1.n1" evidence="1"/>
<dbReference type="EC" id="3.2.1.n2" evidence="1"/>
<dbReference type="EC" id="3.2.1.22" evidence="1"/>
<dbReference type="EMBL" id="CP000140">
    <property type="protein sequence ID" value="ABR44546.1"/>
    <property type="molecule type" value="Genomic_DNA"/>
</dbReference>
<dbReference type="RefSeq" id="WP_011967019.1">
    <property type="nucleotide sequence ID" value="NC_009615.1"/>
</dbReference>
<dbReference type="SMR" id="A6LFT2"/>
<dbReference type="STRING" id="435591.BDI_2833"/>
<dbReference type="CAZy" id="GH110">
    <property type="family name" value="Glycoside Hydrolase Family 110"/>
</dbReference>
<dbReference type="PaxDb" id="435591-BDI_2833"/>
<dbReference type="KEGG" id="pdi:BDI_2833"/>
<dbReference type="PATRIC" id="fig|435591.13.peg.2802"/>
<dbReference type="eggNOG" id="COG5434">
    <property type="taxonomic scope" value="Bacteria"/>
</dbReference>
<dbReference type="HOGENOM" id="CLU_017693_0_0_10"/>
<dbReference type="BioCyc" id="PDIS435591:G1G5A-2909-MONOMER"/>
<dbReference type="Proteomes" id="UP000000566">
    <property type="component" value="Chromosome"/>
</dbReference>
<dbReference type="GO" id="GO:0005886">
    <property type="term" value="C:plasma membrane"/>
    <property type="evidence" value="ECO:0007669"/>
    <property type="project" value="UniProtKB-SubCell"/>
</dbReference>
<dbReference type="GO" id="GO:0004557">
    <property type="term" value="F:alpha-galactosidase activity"/>
    <property type="evidence" value="ECO:0007669"/>
    <property type="project" value="UniProtKB-EC"/>
</dbReference>
<dbReference type="Gene3D" id="2.160.20.10">
    <property type="entry name" value="Single-stranded right-handed beta-helix, Pectin lyase-like"/>
    <property type="match status" value="1"/>
</dbReference>
<dbReference type="InterPro" id="IPR056441">
    <property type="entry name" value="Beta-barrel_GLAA-B_II"/>
</dbReference>
<dbReference type="InterPro" id="IPR012334">
    <property type="entry name" value="Pectin_lyas_fold"/>
</dbReference>
<dbReference type="InterPro" id="IPR011050">
    <property type="entry name" value="Pectin_lyase_fold/virulence"/>
</dbReference>
<dbReference type="Pfam" id="PF23763">
    <property type="entry name" value="Beta-barrel_GLAA-B_I"/>
    <property type="match status" value="1"/>
</dbReference>
<dbReference type="Pfam" id="PF23764">
    <property type="entry name" value="Beta-barrel_GLAA-B_II"/>
    <property type="match status" value="1"/>
</dbReference>
<dbReference type="SUPFAM" id="SSF51126">
    <property type="entry name" value="Pectin lyase-like"/>
    <property type="match status" value="1"/>
</dbReference>
<dbReference type="PROSITE" id="PS51257">
    <property type="entry name" value="PROKAR_LIPOPROTEIN"/>
    <property type="match status" value="1"/>
</dbReference>
<feature type="signal peptide" evidence="2">
    <location>
        <begin position="1"/>
        <end position="19"/>
    </location>
</feature>
<feature type="chain" id="PRO_0000348481" description="Alpha-1,3-galactosidase B">
    <location>
        <begin position="20"/>
        <end position="612"/>
    </location>
</feature>
<feature type="repeat" description="PbH1 1">
    <location>
        <begin position="431"/>
        <end position="453"/>
    </location>
</feature>
<feature type="repeat" description="PbH1 2">
    <location>
        <begin position="454"/>
        <end position="476"/>
    </location>
</feature>
<feature type="repeat" description="PbH1 3">
    <location>
        <begin position="487"/>
        <end position="536"/>
    </location>
</feature>
<feature type="lipid moiety-binding region" description="N-palmitoyl cysteine" evidence="2">
    <location>
        <position position="20"/>
    </location>
</feature>
<feature type="lipid moiety-binding region" description="S-diacylglycerol cysteine" evidence="2">
    <location>
        <position position="20"/>
    </location>
</feature>
<sequence length="612" mass="69565">MKWYLWGAVVLLYSLFGSACSTEWRYDLSAYGLSPVENVDNAPAMARALEQIREKCEENQTIVVTLPKGRYEFYPDSAAERVYFISNHDQMNPKKVGLPFEGMKNMVFDGQGSELIFHGRMLPVSLLDSRNCVLKNFSIDFKHPQISQVKVVENDTVNGGITFEVAPWVHYEIRDSVFVAKGEGWELTPGSGIAFEGDTRHLVYNTSDIPVGVRGLIEVSPRLIKSPRWKDNRLVPGTVIAMRSWERPAPGVFLYHDVNTTLENIKVHYAEGMGLLAQMSENITLDGFSVCLKGADDPRYFTTQADATHFSACKGAIISKNGLYEGMMDDAINVHGTYLKVVRRVNDSTLVGRYMHPQSYGFEWGRVGDSVQFIHSSTMELIGARNRITAIKAVDQPDYRGAKEFEIRFENTVNPSIHEGSGFGIENLEWTPTVLFSDNLIRNNRARGSLFSTPRQTVVENNVFDHTSGTAILLCGDCNGWFETGACRNVLIRKNKFINSLTNMFQFTNAIISIYPEIPDLASQRKYFHSDIVIDANEFITFDRPLVYAKSVDGLVFTNNIVKQNKEYPAFHWNNYRFYFQRVIHSKIENNYFDEGFIRERDVLEENNGYDI</sequence>
<accession>A6LFT2</accession>
<evidence type="ECO:0000250" key="1">
    <source>
        <dbReference type="UniProtKB" id="Q5LGZ8"/>
    </source>
</evidence>
<evidence type="ECO:0000255" key="2">
    <source>
        <dbReference type="PROSITE-ProRule" id="PRU00303"/>
    </source>
</evidence>
<evidence type="ECO:0000305" key="3"/>
<gene>
    <name type="primary">glaB</name>
    <name type="ordered locus">BDI_2833</name>
</gene>
<comment type="function">
    <text evidence="1">Alpha-galactosidase. Removes both branched alpha-1,3-linked galactose residues of blood group B antigens and linear alpha-1,3-linked galactose structures.</text>
</comment>
<comment type="catalytic activity">
    <reaction evidence="1">
        <text>Hydrolysis of terminal, non-reducing branched (1-&gt;3)-alpha-D-galactosidic residues, producing free D-galactose.</text>
        <dbReference type="EC" id="3.2.1.n1"/>
    </reaction>
</comment>
<comment type="catalytic activity">
    <reaction evidence="1">
        <text>Hydrolysis of terminal, non-reducing linear (1-&gt;3)-alpha-D-galactosidic residues, producing free D-galactose.</text>
        <dbReference type="EC" id="3.2.1.n2"/>
    </reaction>
</comment>
<comment type="catalytic activity">
    <reaction evidence="1">
        <text>Hydrolysis of terminal, non-reducing alpha-D-galactose residues in alpha-D-galactosides, including galactose oligosaccharides, galactomannans and galactolipids.</text>
        <dbReference type="EC" id="3.2.1.22"/>
    </reaction>
</comment>
<comment type="subcellular location">
    <subcellularLocation>
        <location evidence="2">Cell membrane</location>
        <topology evidence="2">Lipid-anchor</topology>
    </subcellularLocation>
</comment>
<comment type="similarity">
    <text evidence="3">Belongs to the glycosyl hydrolase 110 family. B subfamily.</text>
</comment>
<organism>
    <name type="scientific">Parabacteroides distasonis (strain ATCC 8503 / DSM 20701 / CIP 104284 / JCM 5825 / NCTC 11152)</name>
    <dbReference type="NCBI Taxonomy" id="435591"/>
    <lineage>
        <taxon>Bacteria</taxon>
        <taxon>Pseudomonadati</taxon>
        <taxon>Bacteroidota</taxon>
        <taxon>Bacteroidia</taxon>
        <taxon>Bacteroidales</taxon>
        <taxon>Tannerellaceae</taxon>
        <taxon>Parabacteroides</taxon>
    </lineage>
</organism>
<keyword id="KW-1003">Cell membrane</keyword>
<keyword id="KW-0326">Glycosidase</keyword>
<keyword id="KW-0378">Hydrolase</keyword>
<keyword id="KW-0449">Lipoprotein</keyword>
<keyword id="KW-0472">Membrane</keyword>
<keyword id="KW-0564">Palmitate</keyword>
<keyword id="KW-1185">Reference proteome</keyword>
<keyword id="KW-0677">Repeat</keyword>
<keyword id="KW-0732">Signal</keyword>
<proteinExistence type="inferred from homology"/>
<protein>
    <recommendedName>
        <fullName>Alpha-1,3-galactosidase B</fullName>
        <ecNumber evidence="1">3.2.1.n1</ecNumber>
        <ecNumber evidence="1">3.2.1.n2</ecNumber>
    </recommendedName>
    <alternativeName>
        <fullName>Exo-alpha-galactosidase B</fullName>
        <ecNumber evidence="1">3.2.1.22</ecNumber>
    </alternativeName>
</protein>